<sequence length="517" mass="58016">MLALLLSPYGAYLGLALLVLYYLLPYLKRAHLRDIPAPGLAAFTNFWLLLQTRRGHRFVVVDNAHKKYGKLVRIAPRHTSIADDGAIQAVYGHGNGFLKSDFYDAFVSIHRGLFNTRDRAEHTRKRKTVSHTFSMKSIGQFEQYIHGNIELFVKQWNRMADTQRNPKTGFASLDALNWFNYLAFDIIGDLAFGAPFGMLDKGKDFAEMRKTPDSPPSYVQAVEVLNRRGEVSATLGCYPALKPFAKYLPDSFFRDGIQAVEDLAGIAVARVNERLRPEVMANNTRVDLLARLMEGKDSNGEKLGRAELTAEALTQLIAGSDTTSNTSCAILYWCMRTPGVIEKLHKALDEAIPQDVDVPTHAMVKDIPYLQWVIWETMRIHSTSAMGLPREIPAGNPPVTISGHTFYPGDVVSVPSYTIHRSKEIWGPDAEQFVPERWDPARLTPRQKAAFIPFSTGPRACVGRNVAEMELLVICGTVFRLFEFEMQQEGPMETREGFLRKPLGLQVGMKRRQPGSA</sequence>
<dbReference type="EC" id="1.14.14.92" evidence="5"/>
<dbReference type="EMBL" id="X52521">
    <property type="protein sequence ID" value="CAA36753.1"/>
    <property type="molecule type" value="Genomic_DNA"/>
</dbReference>
<dbReference type="EMBL" id="AJ347748">
    <property type="protein sequence ID" value="CAC69995.1"/>
    <property type="molecule type" value="mRNA"/>
</dbReference>
<dbReference type="PIR" id="S12015">
    <property type="entry name" value="S12015"/>
</dbReference>
<dbReference type="SMR" id="P17549"/>
<dbReference type="GlyCosmos" id="P17549">
    <property type="glycosylation" value="2 sites, No reported glycans"/>
</dbReference>
<dbReference type="PaxDb" id="5061-CADANGAP00007746"/>
<dbReference type="VEuPathDB" id="FungiDB:An09g03500"/>
<dbReference type="VEuPathDB" id="FungiDB:ASPNIDRAFT2_1148703"/>
<dbReference type="VEuPathDB" id="FungiDB:ATCC64974_10190"/>
<dbReference type="VEuPathDB" id="FungiDB:M747DRAFT_282415"/>
<dbReference type="eggNOG" id="KOG0157">
    <property type="taxonomic scope" value="Eukaryota"/>
</dbReference>
<dbReference type="BioCyc" id="MetaCyc:MONOMER-15438"/>
<dbReference type="BRENDA" id="1.14.14.92">
    <property type="organism ID" value="518"/>
</dbReference>
<dbReference type="GO" id="GO:0043231">
    <property type="term" value="C:intracellular membrane-bounded organelle"/>
    <property type="evidence" value="ECO:0000314"/>
    <property type="project" value="UniProtKB"/>
</dbReference>
<dbReference type="GO" id="GO:0016020">
    <property type="term" value="C:membrane"/>
    <property type="evidence" value="ECO:0007669"/>
    <property type="project" value="UniProtKB-SubCell"/>
</dbReference>
<dbReference type="GO" id="GO:0018664">
    <property type="term" value="F:benzoate 4-monooxygenase activity"/>
    <property type="evidence" value="ECO:0000314"/>
    <property type="project" value="UniProtKB"/>
</dbReference>
<dbReference type="GO" id="GO:0020037">
    <property type="term" value="F:heme binding"/>
    <property type="evidence" value="ECO:0007669"/>
    <property type="project" value="InterPro"/>
</dbReference>
<dbReference type="GO" id="GO:0005506">
    <property type="term" value="F:iron ion binding"/>
    <property type="evidence" value="ECO:0007669"/>
    <property type="project" value="InterPro"/>
</dbReference>
<dbReference type="CDD" id="cd11061">
    <property type="entry name" value="CYP67-like"/>
    <property type="match status" value="1"/>
</dbReference>
<dbReference type="FunFam" id="1.10.630.10:FF:000053">
    <property type="entry name" value="Cytochrome P450 benzoate 4-monooxygenase"/>
    <property type="match status" value="1"/>
</dbReference>
<dbReference type="Gene3D" id="1.10.630.10">
    <property type="entry name" value="Cytochrome P450"/>
    <property type="match status" value="1"/>
</dbReference>
<dbReference type="InterPro" id="IPR001128">
    <property type="entry name" value="Cyt_P450"/>
</dbReference>
<dbReference type="InterPro" id="IPR017972">
    <property type="entry name" value="Cyt_P450_CS"/>
</dbReference>
<dbReference type="InterPro" id="IPR002401">
    <property type="entry name" value="Cyt_P450_E_grp-I"/>
</dbReference>
<dbReference type="InterPro" id="IPR036396">
    <property type="entry name" value="Cyt_P450_sf"/>
</dbReference>
<dbReference type="InterPro" id="IPR050121">
    <property type="entry name" value="Cytochrome_P450_monoxygenase"/>
</dbReference>
<dbReference type="PANTHER" id="PTHR24305:SF29">
    <property type="entry name" value="BENZOATE-PARA-HYDROXYLASE"/>
    <property type="match status" value="1"/>
</dbReference>
<dbReference type="PANTHER" id="PTHR24305">
    <property type="entry name" value="CYTOCHROME P450"/>
    <property type="match status" value="1"/>
</dbReference>
<dbReference type="Pfam" id="PF00067">
    <property type="entry name" value="p450"/>
    <property type="match status" value="1"/>
</dbReference>
<dbReference type="PRINTS" id="PR00463">
    <property type="entry name" value="EP450I"/>
</dbReference>
<dbReference type="PRINTS" id="PR00385">
    <property type="entry name" value="P450"/>
</dbReference>
<dbReference type="SUPFAM" id="SSF48264">
    <property type="entry name" value="Cytochrome P450"/>
    <property type="match status" value="1"/>
</dbReference>
<dbReference type="PROSITE" id="PS00086">
    <property type="entry name" value="CYTOCHROME_P450"/>
    <property type="match status" value="1"/>
</dbReference>
<reference key="1">
    <citation type="journal article" date="1990" name="Mol. Gen. Genet.">
        <title>Isolation and molecular characterisation of the benzoate-para-hydroxylase gene (bphA) of Aspergillus niger: a member of a new gene family of the cytochrome P450 superfamily.</title>
        <authorList>
            <person name="van Gorcom R.F.M."/>
            <person name="Boschloo J.G."/>
            <person name="Kuijvenhoven A."/>
            <person name="Lange J."/>
            <person name="van Vark A.J."/>
            <person name="Bos C.J."/>
            <person name="van Balken J.A.M."/>
            <person name="Pouwels P.H."/>
            <person name="van den Hondel C.A.M.J.J."/>
        </authorList>
    </citation>
    <scope>NUCLEOTIDE SEQUENCE [GENOMIC DNA]</scope>
    <source>
        <strain>ATCC 1015 / NV DSM 2061</strain>
    </source>
</reference>
<reference key="2">
    <citation type="submission" date="2001-09" db="EMBL/GenBank/DDBJ databases">
        <title>Yeast heterologous expression of a benzoate 4-hydroxylase (CYP53) from Aspergillus niger.</title>
        <authorList>
            <person name="Higgins U.M."/>
            <person name="Darby R.M."/>
            <person name="Maddison A."/>
            <person name="Lamb D.C."/>
            <person name="Draper J."/>
        </authorList>
    </citation>
    <scope>NUCLEOTIDE SEQUENCE [MRNA]</scope>
</reference>
<reference key="3">
    <citation type="journal article" date="1991" name="Curr. Genet.">
        <title>Genetic analysis of Aspergillus niger mutants defective in benzoate-4-hydroxylase function.</title>
        <authorList>
            <person name="Boschloo J.G."/>
            <person name="Moonen E."/>
            <person name="van Gorcom R.F."/>
            <person name="Hermes H.F."/>
            <person name="Bos C.J."/>
        </authorList>
    </citation>
    <scope>IDENTIFICATION</scope>
</reference>
<reference key="4">
    <citation type="journal article" date="2000" name="Mol. Gen. Genet.">
        <title>Regulation of expression of the Aspergillus niger benzoate para-hydroxylase cytochrome P450 system.</title>
        <authorList>
            <person name="van den Brink J.M."/>
            <person name="Punt P.J."/>
            <person name="van Gorcom R.F."/>
            <person name="van den Hondel C.A."/>
        </authorList>
    </citation>
    <scope>INDUCTION</scope>
</reference>
<reference key="5">
    <citation type="journal article" date="2001" name="Arch. Biochem. Biophys.">
        <title>Purification and characterization of benzoate-para-hydroxylase, a cytochrome P450 (CYP53A1), from Aspergillus niger.</title>
        <authorList>
            <person name="Faber B.W."/>
            <person name="van Gorcom R.F.M."/>
            <person name="Duine J.A."/>
        </authorList>
    </citation>
    <scope>FUNCTION</scope>
    <scope>CATALYTIC ACTIVITY</scope>
    <scope>BIOPHYSICOCHEMICAL PROPERTIES</scope>
    <scope>CHARACTERIZATION</scope>
    <source>
        <strain>T18.5</strain>
    </source>
</reference>
<reference key="6">
    <citation type="journal article" date="2019" name="ACS Sustain. Chem. Eng.">
        <title>Discovery of novel p-hydroxybenzoate-m-hydroxylase, protocatechuate 3,4 ring-cleavage dioxygenase, and hydroxyquinol 1,2 ring-cleavage dioxygenase from the filamentous fungus Aspergillus niger.</title>
        <authorList>
            <person name="Lubbers R.J.M."/>
            <person name="Dilokpimol A."/>
            <person name="Peng M."/>
            <person name="Visser J."/>
            <person name="Makela M.R."/>
            <person name="Hilden K.S."/>
            <person name="de Vries R.P."/>
        </authorList>
    </citation>
    <scope>FUNCTION</scope>
    <scope>INDUCTION</scope>
    <scope>DISRUPTION PHENOTYPE</scope>
</reference>
<feature type="chain" id="PRO_0000052038" description="Benzoate 4-monooxygenase bphA">
    <location>
        <begin position="1"/>
        <end position="517"/>
    </location>
</feature>
<feature type="transmembrane region" description="Helical" evidence="2">
    <location>
        <begin position="4"/>
        <end position="24"/>
    </location>
</feature>
<feature type="binding site" description="axial binding residue" evidence="1">
    <location>
        <position position="461"/>
    </location>
    <ligand>
        <name>heme</name>
        <dbReference type="ChEBI" id="CHEBI:30413"/>
    </ligand>
    <ligandPart>
        <name>Fe</name>
        <dbReference type="ChEBI" id="CHEBI:18248"/>
    </ligandPart>
</feature>
<feature type="glycosylation site" description="N-linked (GlcNAc...) asparagine" evidence="3">
    <location>
        <position position="282"/>
    </location>
</feature>
<feature type="glycosylation site" description="N-linked (GlcNAc...) asparagine" evidence="3">
    <location>
        <position position="325"/>
    </location>
</feature>
<comment type="function">
    <text evidence="5 6">Cytochrome P450 monooxygenase; part of the benzoic acid degradation pathway also known as the protocatechuic acid pathway (PubMed:11594739, Ref.6). Benzoic acid debradation begins with the conversion of benzoic acid into 4-hydroxybenzoic acid through hydroxylation by the benzoate-4-monooxygenase bphA, and its partner NADPH-cytochrome P450 reductase cprA which act as a mediator in electron donation from NADPH (PubMed:11594739). 4-Hydroxybenzoic acid is then converted into 3,4-dihydroxybenzoic acid (also called protocatechuic acid) by the p-hydroxybenzoate-m-hydroxylase phhA (Ref.6). Protocatechuic acid is converted into 3-carboxy-cis,cis-muconic acid by the intradiol ring-cleavage dioxygenase prcA, which is further metabolized through the 3-oxoadipate pathway to finally enter the tricarboxylic acid cycle (TCA) (Ref.6).</text>
</comment>
<comment type="function">
    <text evidence="5">Responsible for cytochrome P450 dependent benzoate hydroxylation in microsomes; requires cprA as the mediator in electron donation from NADPH.</text>
</comment>
<comment type="catalytic activity">
    <reaction evidence="5">
        <text>benzoate + reduced [NADPH--hemoprotein reductase] + O2 = 4-hydroxybenzoate + oxidized [NADPH--hemoprotein reductase] + H2O + H(+)</text>
        <dbReference type="Rhea" id="RHEA:18033"/>
        <dbReference type="Rhea" id="RHEA-COMP:11964"/>
        <dbReference type="Rhea" id="RHEA-COMP:11965"/>
        <dbReference type="ChEBI" id="CHEBI:15377"/>
        <dbReference type="ChEBI" id="CHEBI:15378"/>
        <dbReference type="ChEBI" id="CHEBI:15379"/>
        <dbReference type="ChEBI" id="CHEBI:16150"/>
        <dbReference type="ChEBI" id="CHEBI:17879"/>
        <dbReference type="ChEBI" id="CHEBI:57618"/>
        <dbReference type="ChEBI" id="CHEBI:58210"/>
        <dbReference type="EC" id="1.14.14.92"/>
    </reaction>
</comment>
<comment type="cofactor">
    <cofactor evidence="1">
        <name>heme</name>
        <dbReference type="ChEBI" id="CHEBI:30413"/>
    </cofactor>
</comment>
<comment type="biophysicochemical properties">
    <kinetics>
        <KM evidence="5">0.083 mM for benzoate</KM>
        <KM evidence="5">0.097 mM for 2-fluorobenzoate</KM>
        <KM evidence="5">0.31 mM for 2-chlorobenzoate</KM>
        <KM evidence="5">0.28 mM for 2-hydroxybenzoate</KM>
        <KM evidence="5">1.6 mM for 2-methylbenzoate</KM>
        <KM evidence="5">0.086 mM for 3-fluorobenzoate</KM>
        <KM evidence="5">0.127 mM for 3-chlorobenzoate</KM>
        <KM evidence="5">0.673 mM for 3-hydroxybenzoate</KM>
        <KM evidence="5">0.189 mM for 3-methylbenzoate</KM>
        <text evidence="5">kcat is 270 min(-1) for benzoate.</text>
    </kinetics>
</comment>
<comment type="subcellular location">
    <subcellularLocation>
        <location evidence="2">Membrane</location>
        <topology evidence="2">Single-pass membrane protein</topology>
    </subcellularLocation>
</comment>
<comment type="induction">
    <text evidence="4 6">Expression is induced in the presence of caffeic acid, p-coumaric acid, p-hydroxybenzoic acid, protocatechuic acid, and benzoic acid.</text>
</comment>
<comment type="disruption phenotype">
    <text evidence="6">Leads to reduced growth on benzoic acid (Ref.6). Growth is also reduced on benzaldehyde, benzyl alcohol, and cinnamic acid (Ref.6).</text>
</comment>
<comment type="similarity">
    <text evidence="9">Belongs to the cytochrome P450 family.</text>
</comment>
<organism>
    <name type="scientific">Aspergillus niger</name>
    <dbReference type="NCBI Taxonomy" id="5061"/>
    <lineage>
        <taxon>Eukaryota</taxon>
        <taxon>Fungi</taxon>
        <taxon>Dikarya</taxon>
        <taxon>Ascomycota</taxon>
        <taxon>Pezizomycotina</taxon>
        <taxon>Eurotiomycetes</taxon>
        <taxon>Eurotiomycetidae</taxon>
        <taxon>Eurotiales</taxon>
        <taxon>Aspergillaceae</taxon>
        <taxon>Aspergillus</taxon>
        <taxon>Aspergillus subgen. Circumdati</taxon>
    </lineage>
</organism>
<keyword id="KW-0325">Glycoprotein</keyword>
<keyword id="KW-0349">Heme</keyword>
<keyword id="KW-0408">Iron</keyword>
<keyword id="KW-0472">Membrane</keyword>
<keyword id="KW-0479">Metal-binding</keyword>
<keyword id="KW-0503">Monooxygenase</keyword>
<keyword id="KW-0560">Oxidoreductase</keyword>
<keyword id="KW-0812">Transmembrane</keyword>
<keyword id="KW-1133">Transmembrane helix</keyword>
<evidence type="ECO:0000250" key="1">
    <source>
        <dbReference type="UniProtKB" id="P04798"/>
    </source>
</evidence>
<evidence type="ECO:0000255" key="2"/>
<evidence type="ECO:0000255" key="3">
    <source>
        <dbReference type="PROSITE-ProRule" id="PRU00498"/>
    </source>
</evidence>
<evidence type="ECO:0000269" key="4">
    <source>
    </source>
</evidence>
<evidence type="ECO:0000269" key="5">
    <source>
    </source>
</evidence>
<evidence type="ECO:0000269" key="6">
    <source ref="6"/>
</evidence>
<evidence type="ECO:0000303" key="7">
    <source>
    </source>
</evidence>
<evidence type="ECO:0000303" key="8">
    <source>
    </source>
</evidence>
<evidence type="ECO:0000305" key="9"/>
<proteinExistence type="evidence at protein level"/>
<gene>
    <name evidence="8" type="primary">bphA</name>
    <name evidence="7" type="synonym">cyp53A1</name>
</gene>
<protein>
    <recommendedName>
        <fullName evidence="7">Benzoate 4-monooxygenase bphA</fullName>
        <ecNumber evidence="5">1.14.14.92</ecNumber>
    </recommendedName>
    <alternativeName>
        <fullName evidence="7">Benzoate-para-hydroxylase A</fullName>
        <shortName evidence="7">BpH</shortName>
    </alternativeName>
    <alternativeName>
        <fullName evidence="7">Cytochrome P450 monooxygenase cyp53A1</fullName>
    </alternativeName>
</protein>
<name>BPHA_ASPNG</name>
<accession>P17549</accession>